<protein>
    <recommendedName>
        <fullName>Androgen receptor</fullName>
    </recommendedName>
    <alternativeName>
        <fullName>Dihydrotestosterone receptor</fullName>
    </alternativeName>
    <alternativeName>
        <fullName>Nuclear receptor subfamily 3 group C member 4</fullName>
    </alternativeName>
</protein>
<proteinExistence type="evidence at transcript level"/>
<feature type="chain" id="PRO_0000053703" description="Androgen receptor">
    <location>
        <begin position="1"/>
        <end position="884"/>
    </location>
</feature>
<feature type="domain" description="NR LBD" evidence="6">
    <location>
        <begin position="633"/>
        <end position="864"/>
    </location>
</feature>
<feature type="DNA-binding region" description="Nuclear receptor" evidence="5">
    <location>
        <begin position="523"/>
        <end position="596"/>
    </location>
</feature>
<feature type="zinc finger region" description="NR C4-type" evidence="5">
    <location>
        <begin position="524"/>
        <end position="544"/>
    </location>
</feature>
<feature type="zinc finger region" description="NR C4-type" evidence="5">
    <location>
        <begin position="560"/>
        <end position="584"/>
    </location>
</feature>
<feature type="region of interest" description="Interaction with ZNF318" evidence="4">
    <location>
        <begin position="1"/>
        <end position="551"/>
    </location>
</feature>
<feature type="region of interest" description="Modulating" evidence="1">
    <location>
        <begin position="1"/>
        <end position="522"/>
    </location>
</feature>
<feature type="region of interest" description="Disordered" evidence="7">
    <location>
        <begin position="33"/>
        <end position="145"/>
    </location>
</feature>
<feature type="region of interest" description="Disordered" evidence="7">
    <location>
        <begin position="174"/>
        <end position="207"/>
    </location>
</feature>
<feature type="region of interest" description="Disordered" evidence="7">
    <location>
        <begin position="275"/>
        <end position="294"/>
    </location>
</feature>
<feature type="region of interest" description="Interaction with LPXN" evidence="2">
    <location>
        <begin position="516"/>
        <end position="883"/>
    </location>
</feature>
<feature type="region of interest" description="Interaction with HIPK3" evidence="3">
    <location>
        <begin position="536"/>
        <end position="626"/>
    </location>
</feature>
<feature type="region of interest" description="Interaction with CCAR1" evidence="2">
    <location>
        <begin position="556"/>
        <end position="883"/>
    </location>
</feature>
<feature type="region of interest" description="Interaction with KAT7" evidence="2">
    <location>
        <begin position="589"/>
        <end position="883"/>
    </location>
</feature>
<feature type="compositionally biased region" description="Low complexity" evidence="7">
    <location>
        <begin position="55"/>
        <end position="79"/>
    </location>
</feature>
<feature type="compositionally biased region" description="Low complexity" evidence="7">
    <location>
        <begin position="174"/>
        <end position="196"/>
    </location>
</feature>
<feature type="compositionally biased region" description="Polar residues" evidence="7">
    <location>
        <begin position="197"/>
        <end position="207"/>
    </location>
</feature>
<feature type="binding site" evidence="2">
    <location>
        <position position="670"/>
    </location>
    <ligand>
        <name>17beta-hydroxy-5alpha-androstan-3-one</name>
        <dbReference type="ChEBI" id="CHEBI:16330"/>
    </ligand>
</feature>
<feature type="binding site" evidence="2">
    <location>
        <position position="717"/>
    </location>
    <ligand>
        <name>17beta-hydroxy-5alpha-androstan-3-one</name>
        <dbReference type="ChEBI" id="CHEBI:16330"/>
    </ligand>
</feature>
<feature type="binding site" evidence="2">
    <location>
        <position position="842"/>
    </location>
    <ligand>
        <name>17beta-hydroxy-5alpha-androstan-3-one</name>
        <dbReference type="ChEBI" id="CHEBI:16330"/>
    </ligand>
</feature>
<feature type="site" description="Interaction with coactivator LXXL and FXXFY motifs" evidence="2">
    <location>
        <position position="685"/>
    </location>
</feature>
<feature type="site" description="Interaction with coactivator FXXLF and FXXFY motifs" evidence="2">
    <location>
        <position position="862"/>
    </location>
</feature>
<feature type="modified residue" description="Phosphoserine; by CDK9" evidence="2">
    <location>
        <position position="61"/>
    </location>
</feature>
<feature type="modified residue" description="Phosphoserine" evidence="2">
    <location>
        <position position="75"/>
    </location>
</feature>
<feature type="modified residue" description="Phosphotyrosine; by CSK" evidence="2">
    <location>
        <position position="204"/>
    </location>
</feature>
<feature type="modified residue" description="Phosphoserine" evidence="2">
    <location>
        <position position="237"/>
    </location>
</feature>
<feature type="modified residue" description="Phosphotyrosine; by CSK and TNK2" evidence="2">
    <location>
        <position position="248"/>
    </location>
</feature>
<feature type="modified residue" description="Phosphotyrosine; by CSK" evidence="2">
    <location>
        <position position="288"/>
    </location>
</feature>
<feature type="modified residue" description="Phosphotyrosine; by CSK" evidence="2">
    <location>
        <position position="327"/>
    </location>
</feature>
<feature type="modified residue" description="Phosphotyrosine; by CSK" evidence="2">
    <location>
        <position position="338"/>
    </location>
</feature>
<feature type="modified residue" description="Phosphotyrosine; by CSK" evidence="2">
    <location>
        <position position="343"/>
    </location>
</feature>
<feature type="modified residue" description="Phosphotyrosine; by CSK and TNK2" evidence="2">
    <location>
        <position position="344"/>
    </location>
</feature>
<feature type="modified residue" description="Phosphotyrosine; by CSK" evidence="2">
    <location>
        <position position="374"/>
    </location>
</feature>
<feature type="modified residue" description="Phosphotyrosine; by CSK" evidence="2">
    <location>
        <position position="499"/>
    </location>
</feature>
<feature type="modified residue" description="Phosphotyrosine; by CSK" evidence="2">
    <location>
        <position position="516"/>
    </location>
</feature>
<feature type="modified residue" description="Phosphoserine; by STK4/MST1" evidence="2">
    <location>
        <position position="615"/>
    </location>
</feature>
<feature type="modified residue" description="Phosphotyrosine; by CSK" evidence="2">
    <location>
        <position position="880"/>
    </location>
</feature>
<feature type="cross-link" description="Glycyl lysine isopeptide (Lys-Gly) (interchain with G-Cter in SUMO)" evidence="1">
    <location>
        <position position="367"/>
    </location>
</feature>
<feature type="cross-link" description="Glycyl lysine isopeptide (Lys-Gly) (interchain with G-Cter in SUMO)" evidence="1">
    <location>
        <position position="485"/>
    </location>
</feature>
<feature type="cross-link" description="Glycyl lysine isopeptide (Lys-Gly) (interchain with G-Cter in ubiquitin)" evidence="2">
    <location>
        <position position="810"/>
    </location>
</feature>
<feature type="cross-link" description="Glycyl lysine isopeptide (Lys-Gly) (interchain with G-Cter in ubiquitin)" evidence="2">
    <location>
        <position position="812"/>
    </location>
</feature>
<accession>O97776</accession>
<dbReference type="EMBL" id="U94178">
    <property type="protein sequence ID" value="AAC73049.1"/>
    <property type="molecule type" value="mRNA"/>
</dbReference>
<dbReference type="SMR" id="O97776"/>
<dbReference type="GO" id="GO:0000785">
    <property type="term" value="C:chromatin"/>
    <property type="evidence" value="ECO:0000250"/>
    <property type="project" value="UniProtKB"/>
</dbReference>
<dbReference type="GO" id="GO:0005737">
    <property type="term" value="C:cytoplasm"/>
    <property type="evidence" value="ECO:0000250"/>
    <property type="project" value="UniProtKB"/>
</dbReference>
<dbReference type="GO" id="GO:0005654">
    <property type="term" value="C:nucleoplasm"/>
    <property type="evidence" value="ECO:0007669"/>
    <property type="project" value="UniProtKB-ARBA"/>
</dbReference>
<dbReference type="GO" id="GO:0005634">
    <property type="term" value="C:nucleus"/>
    <property type="evidence" value="ECO:0000250"/>
    <property type="project" value="UniProtKB"/>
</dbReference>
<dbReference type="GO" id="GO:0005497">
    <property type="term" value="F:androgen binding"/>
    <property type="evidence" value="ECO:0000250"/>
    <property type="project" value="UniProtKB"/>
</dbReference>
<dbReference type="GO" id="GO:0008013">
    <property type="term" value="F:beta-catenin binding"/>
    <property type="evidence" value="ECO:0000250"/>
    <property type="project" value="UniProtKB"/>
</dbReference>
<dbReference type="GO" id="GO:0003700">
    <property type="term" value="F:DNA-binding transcription factor activity"/>
    <property type="evidence" value="ECO:0000250"/>
    <property type="project" value="UniProtKB"/>
</dbReference>
<dbReference type="GO" id="GO:0004879">
    <property type="term" value="F:nuclear receptor activity"/>
    <property type="evidence" value="ECO:0000250"/>
    <property type="project" value="UniProtKB"/>
</dbReference>
<dbReference type="GO" id="GO:0005496">
    <property type="term" value="F:steroid binding"/>
    <property type="evidence" value="ECO:0007669"/>
    <property type="project" value="UniProtKB-KW"/>
</dbReference>
<dbReference type="GO" id="GO:0000976">
    <property type="term" value="F:transcription cis-regulatory region binding"/>
    <property type="evidence" value="ECO:0000250"/>
    <property type="project" value="UniProtKB"/>
</dbReference>
<dbReference type="GO" id="GO:0008270">
    <property type="term" value="F:zinc ion binding"/>
    <property type="evidence" value="ECO:0007669"/>
    <property type="project" value="UniProtKB-KW"/>
</dbReference>
<dbReference type="GO" id="GO:0030521">
    <property type="term" value="P:androgen receptor signaling pathway"/>
    <property type="evidence" value="ECO:0000250"/>
    <property type="project" value="UniProtKB"/>
</dbReference>
<dbReference type="GO" id="GO:0030522">
    <property type="term" value="P:intracellular receptor signaling pathway"/>
    <property type="evidence" value="ECO:0000250"/>
    <property type="project" value="UniProtKB"/>
</dbReference>
<dbReference type="GO" id="GO:2001237">
    <property type="term" value="P:negative regulation of extrinsic apoptotic signaling pathway"/>
    <property type="evidence" value="ECO:0000250"/>
    <property type="project" value="UniProtKB"/>
</dbReference>
<dbReference type="GO" id="GO:0008284">
    <property type="term" value="P:positive regulation of cell population proliferation"/>
    <property type="evidence" value="ECO:0000250"/>
    <property type="project" value="UniProtKB"/>
</dbReference>
<dbReference type="GO" id="GO:0010628">
    <property type="term" value="P:positive regulation of gene expression"/>
    <property type="evidence" value="ECO:0000250"/>
    <property type="project" value="UniProtKB"/>
</dbReference>
<dbReference type="GO" id="GO:0045944">
    <property type="term" value="P:positive regulation of transcription by RNA polymerase II"/>
    <property type="evidence" value="ECO:0000250"/>
    <property type="project" value="UniProtKB"/>
</dbReference>
<dbReference type="GO" id="GO:1903076">
    <property type="term" value="P:regulation of protein localization to plasma membrane"/>
    <property type="evidence" value="ECO:0000250"/>
    <property type="project" value="UniProtKB"/>
</dbReference>
<dbReference type="CDD" id="cd07173">
    <property type="entry name" value="NR_DBD_AR"/>
    <property type="match status" value="1"/>
</dbReference>
<dbReference type="CDD" id="cd07073">
    <property type="entry name" value="NR_LBD_AR"/>
    <property type="match status" value="1"/>
</dbReference>
<dbReference type="FunFam" id="3.30.50.10:FF:000024">
    <property type="entry name" value="Androgen receptor"/>
    <property type="match status" value="1"/>
</dbReference>
<dbReference type="FunFam" id="1.10.565.10:FF:000004">
    <property type="entry name" value="Androgen receptor variant"/>
    <property type="match status" value="1"/>
</dbReference>
<dbReference type="Gene3D" id="3.30.50.10">
    <property type="entry name" value="Erythroid Transcription Factor GATA-1, subunit A"/>
    <property type="match status" value="1"/>
</dbReference>
<dbReference type="Gene3D" id="1.10.565.10">
    <property type="entry name" value="Retinoid X Receptor"/>
    <property type="match status" value="1"/>
</dbReference>
<dbReference type="InterPro" id="IPR001103">
    <property type="entry name" value="Andrgn_rcpt"/>
</dbReference>
<dbReference type="InterPro" id="IPR035500">
    <property type="entry name" value="NHR-like_dom_sf"/>
</dbReference>
<dbReference type="InterPro" id="IPR000536">
    <property type="entry name" value="Nucl_hrmn_rcpt_lig-bd"/>
</dbReference>
<dbReference type="InterPro" id="IPR050200">
    <property type="entry name" value="Nuclear_hormone_rcpt_NR3"/>
</dbReference>
<dbReference type="InterPro" id="IPR001723">
    <property type="entry name" value="Nuclear_hrmn_rcpt"/>
</dbReference>
<dbReference type="InterPro" id="IPR001628">
    <property type="entry name" value="Znf_hrmn_rcpt"/>
</dbReference>
<dbReference type="InterPro" id="IPR013088">
    <property type="entry name" value="Znf_NHR/GATA"/>
</dbReference>
<dbReference type="PANTHER" id="PTHR48092">
    <property type="entry name" value="KNIRPS-RELATED PROTEIN-RELATED"/>
    <property type="match status" value="1"/>
</dbReference>
<dbReference type="Pfam" id="PF02166">
    <property type="entry name" value="Androgen_recep"/>
    <property type="match status" value="1"/>
</dbReference>
<dbReference type="Pfam" id="PF00104">
    <property type="entry name" value="Hormone_recep"/>
    <property type="match status" value="1"/>
</dbReference>
<dbReference type="Pfam" id="PF00105">
    <property type="entry name" value="zf-C4"/>
    <property type="match status" value="1"/>
</dbReference>
<dbReference type="PRINTS" id="PR00521">
    <property type="entry name" value="ANDROGENR"/>
</dbReference>
<dbReference type="PRINTS" id="PR00398">
    <property type="entry name" value="STRDHORMONER"/>
</dbReference>
<dbReference type="PRINTS" id="PR00047">
    <property type="entry name" value="STROIDFINGER"/>
</dbReference>
<dbReference type="SMART" id="SM00430">
    <property type="entry name" value="HOLI"/>
    <property type="match status" value="1"/>
</dbReference>
<dbReference type="SMART" id="SM00399">
    <property type="entry name" value="ZnF_C4"/>
    <property type="match status" value="1"/>
</dbReference>
<dbReference type="SUPFAM" id="SSF57716">
    <property type="entry name" value="Glucocorticoid receptor-like (DNA-binding domain)"/>
    <property type="match status" value="1"/>
</dbReference>
<dbReference type="SUPFAM" id="SSF48508">
    <property type="entry name" value="Nuclear receptor ligand-binding domain"/>
    <property type="match status" value="1"/>
</dbReference>
<dbReference type="PROSITE" id="PS51843">
    <property type="entry name" value="NR_LBD"/>
    <property type="match status" value="1"/>
</dbReference>
<dbReference type="PROSITE" id="PS00031">
    <property type="entry name" value="NUCLEAR_REC_DBD_1"/>
    <property type="match status" value="1"/>
</dbReference>
<dbReference type="PROSITE" id="PS51030">
    <property type="entry name" value="NUCLEAR_REC_DBD_2"/>
    <property type="match status" value="1"/>
</dbReference>
<keyword id="KW-0963">Cytoplasm</keyword>
<keyword id="KW-0238">DNA-binding</keyword>
<keyword id="KW-1017">Isopeptide bond</keyword>
<keyword id="KW-0446">Lipid-binding</keyword>
<keyword id="KW-0449">Lipoprotein</keyword>
<keyword id="KW-0479">Metal-binding</keyword>
<keyword id="KW-0539">Nucleus</keyword>
<keyword id="KW-0564">Palmitate</keyword>
<keyword id="KW-0597">Phosphoprotein</keyword>
<keyword id="KW-0675">Receptor</keyword>
<keyword id="KW-0754">Steroid-binding</keyword>
<keyword id="KW-0804">Transcription</keyword>
<keyword id="KW-0805">Transcription regulation</keyword>
<keyword id="KW-0832">Ubl conjugation</keyword>
<keyword id="KW-0862">Zinc</keyword>
<keyword id="KW-0863">Zinc-finger</keyword>
<gene>
    <name type="primary">AR</name>
    <name type="synonym">NR3C4</name>
</gene>
<name>ANDR_EULFC</name>
<sequence length="884" mass="95611">MEVQLGLGRVYPRPPSKTYRGAFQNLFQSVREVIQNPGPRHPEAASAAPPGARLQQQQETSPPQQQQQQQGEDGSPQAQSRGPTGYLALDEEQQPSQQQSALECHPESGCVPEPGAAAAASKGLQQQPPAPSDEDDSAVPSTLSLLGPTFPGLSSCSADLKDILSEAGTMQLLQQQQQEAVSEGSSSGRAREAAGAPTSSKDSYLGGTSTISDSAKELCKAVSVSMGLGVETLEHLSPGEQLRGDCMYAPLLGGPPAVRPTPCAPLAECKGSLLDDSADKGTEEPAEYTPFKGSYTQGLEGESLGCSGSSEAGSSGTLELPSTLSLYKSGALEEAASYQSRDYYNFPLALAGPPPPPLPPHPHARIKLENPLDYGSSWAAAAAQCRFGDLASLHGGGATGPGSGSPSAAAASSWHTLFTAEEGQLYGPCGGGGGGTSEAGAVTPYGYSRPPQGLAGQEGDFPAPDVWYPSGVVSRVPYPSPSCVKSEMGPWMESYSGPYGDVRLETARDHVLPIDYYFPPQKTCLICGDEASGCHYGALTCGSCKVFFKRAAEGKQKYLCASRNDCTIDKFRRKNCPSCRLRKCYEAGMTLGARKLKKLGNLKLQEEGEASSATSPTEESSQKLTVSHIEGYECQPIFLNVLEAIEPGVVCAGHDNNQPDSFAALLSSLNELGERQLVHVVKWAKALPGFRNLHVDDQMAVIQYSWMGLMVFAMGWRSFTNVNSRMLYFAPDLVFNEYRMHKSRMYSQCVRMRHLSQEFGWLQITPQEFLCMKALLLFSIIPVDGLKNQKFFDELRMNYIKELDRIIACKRKNPTSCSRRFYQLTKLLDSVQPIARELHQFTFDLLIKSHMVSVDFPEMMAEIISVQVPKILSGKVKPIYFHTQ</sequence>
<reference key="1">
    <citation type="journal article" date="1998" name="J. Mol. Evol.">
        <title>Evolution of the primate androgen receptor: a structural basis for disease.</title>
        <authorList>
            <person name="Choong C.S."/>
            <person name="Kemppainen J.A."/>
            <person name="Wilson E.M."/>
        </authorList>
    </citation>
    <scope>NUCLEOTIDE SEQUENCE [MRNA]</scope>
</reference>
<organism>
    <name type="scientific">Eulemur fulvus collaris</name>
    <name type="common">Collared brown lemur</name>
    <name type="synonym">Eulemur collaris</name>
    <dbReference type="NCBI Taxonomy" id="47178"/>
    <lineage>
        <taxon>Eukaryota</taxon>
        <taxon>Metazoa</taxon>
        <taxon>Chordata</taxon>
        <taxon>Craniata</taxon>
        <taxon>Vertebrata</taxon>
        <taxon>Euteleostomi</taxon>
        <taxon>Mammalia</taxon>
        <taxon>Eutheria</taxon>
        <taxon>Euarchontoglires</taxon>
        <taxon>Primates</taxon>
        <taxon>Strepsirrhini</taxon>
        <taxon>Lemuriformes</taxon>
        <taxon>Lemuridae</taxon>
        <taxon>Eulemur</taxon>
    </lineage>
</organism>
<evidence type="ECO:0000250" key="1"/>
<evidence type="ECO:0000250" key="2">
    <source>
        <dbReference type="UniProtKB" id="P10275"/>
    </source>
</evidence>
<evidence type="ECO:0000250" key="3">
    <source>
        <dbReference type="UniProtKB" id="P15207"/>
    </source>
</evidence>
<evidence type="ECO:0000250" key="4">
    <source>
        <dbReference type="UniProtKB" id="P19091"/>
    </source>
</evidence>
<evidence type="ECO:0000255" key="5">
    <source>
        <dbReference type="PROSITE-ProRule" id="PRU00407"/>
    </source>
</evidence>
<evidence type="ECO:0000255" key="6">
    <source>
        <dbReference type="PROSITE-ProRule" id="PRU01189"/>
    </source>
</evidence>
<evidence type="ECO:0000256" key="7">
    <source>
        <dbReference type="SAM" id="MobiDB-lite"/>
    </source>
</evidence>
<evidence type="ECO:0000305" key="8"/>
<comment type="function">
    <text evidence="2 3">Steroid hormone receptors are ligand-activated transcription factors that regulate eukaryotic gene expression and affect cellular proliferation and differentiation in target tissues. Transcription factor activity is modulated by bound coactivator and corepressor proteins like ZBTB7A that recruits NCOR1 and NCOR2 to the androgen response elements/ARE on target genes, negatively regulating androgen receptor signaling and androgen-induced cell proliferation. Transcription activation is also down-regulated by NR0B2. Activated, but not phosphorylated, by HIPK3 and ZIPK/DAPK3.</text>
</comment>
<comment type="subunit">
    <text evidence="2 3 4">Binds DNA as a homodimer. Part of a ternary complex containing AR, EFCAB6/DJBP and PARK7. Interacts with HIPK3 and NR0B2 in the presence of androgen. The ligand binding domain interacts with KAT7/HBO1 in the presence of dihydrotestosterone. Interacts with EFCAB6/DJBP, PQBP1, RANBP9, RBAK, SPDEF, SRA1, TGFB1I1 and RREB1. Interacts with ZMIZ1/ZIMP10 and ZMIZ2/ZMIP7 which both enhance its transactivation activity. Interacts with SLC30A9 and RAD54L2/ARIP4. Interacts with MACROD1 (via macro domain) (By similarity). Interacts via the ligand-binding domain with LXXLL and FXXLF motifs from NCOA1, NCOA2, NCOA3 and MAGEA11. Interacts (via nuclear receptor DNA binding domain and nuclear receptor ligand binding domain) with NCOA4 (By similarity). The AR N-terminal poly-Gln region binds Ran resulting in enhancement of AR-mediated transactivation. Ran-binding decreases as the poly-Gln length increases. Interacts with HIP1 (via coiled coil domain). Interacts (via ligand-binding domain) with TRIM68. Interacts with TNK2. Interacts with USP26. Interacts with RNF6. Interacts (regulated by RNF6 probably through polyubiquitination) with RNF14; regulates AR transcriptional activity. Interacts with PRMT2 and TRIM24. Interacts with RACK1. Interacts with RANBP10; this interaction enhances dihydrotestosterone-induced AR transcriptional activity. Interacts with PRPF6 in a hormone-independent way; this interaction enhances dihydrotestosterone-induced AR transcriptional activity. Interacts with STK4/MST1. Interacts with ZIPK/DAPK3. Interacts with LPXN. Interacts with MAK. Part of a complex containing AR, MAK and NCOA3. Interacts with CRY1. Interacts with CCAR1 and GATA2. Interacts with ZNF318. Interacts with BUD31. Interacts with ARID4A. Interacts with ARID4B. Interacts (via NR LBD domain) with ZBTB7A; the interaction is direct and androgen-dependent (By similarity). Interacts with NCOR1 (By similarity). Interacts with NCOR2 (By similarity). Interacts with CRY2 in a ligand-dependent manner (By similarity).</text>
</comment>
<comment type="subcellular location">
    <subcellularLocation>
        <location evidence="2">Nucleus</location>
    </subcellularLocation>
    <subcellularLocation>
        <location evidence="2">Cytoplasm</location>
    </subcellularLocation>
    <text evidence="2">Detected at the promoter of target genes. Predominantly cytoplasmic in unligated form but translocates to the nucleus upon ligand-binding. Can also translocate to the nucleus in unligated form in the presence of RACK1.</text>
</comment>
<comment type="domain">
    <text evidence="1">Composed of three domains: a modulating N-terminal domain, a DNA-binding domain and a C-terminal ligand-binding domain. In the presence of bound steroid the ligand-binding domain interacts with the N-terminal modulating domain, and thereby activates AR transcription factor activity. Agonist binding is required for dimerization and binding to target DNA. The transcription factor activity of the complex formed by ligand-activated AR and DNA is modulated by interactions with coactivator and corepressor proteins. Interaction with RANBP9 is mediated by both the N-terminal domain and the DNA-binding domain. Interaction with EFCAB6/DJBP is mediated by the DNA-binding domain (By similarity).</text>
</comment>
<comment type="PTM">
    <text evidence="2">Phosphorylated in prostate cancer cells in response to several growth factors including EGF. Phosphorylation is induced by c-Src kinase (CSK). Tyr-499 is one of the major phosphorylation sites and an increase in phosphorylation and Src kinase activity is associated with prostate cancer progression (By similarity). Phosphorylation by TNK2 enhances the DNA-binding and transcriptional activity. Phosphorylation at Ser-61 by CDK9 regulates AR promoter selectivity and cell growth (By similarity).</text>
</comment>
<comment type="PTM">
    <text evidence="2">Sumoylated on Lys-367 (major) and Lys-485 (By similarity). Ubiquitinated. Deubiquitinated by USP26 (By similarity). 'Lys-6' and 'Lys-27'-linked polyubiquitination by RNF6 modulates AR transcriptional activity and specificity (By similarity).</text>
</comment>
<comment type="PTM">
    <text evidence="2">Palmitoylated by ZDHHC7 and ZDHHC21. Palmitoylation is required for plasma membrane targeting and for rapid intracellular signaling via ERK and AKT kinases and cAMP generation.</text>
</comment>
<comment type="miscellaneous">
    <text>In the absence of ligand, steroid hormone receptors are thought to be weakly associated with nuclear components; hormone binding greatly increases receptor affinity. The hormone-receptor complex appears to recognize discrete DNA sequences upstream of transcriptional start sites.</text>
</comment>
<comment type="miscellaneous">
    <text>Transcriptional activity is enhanced by binding to RANBP9.</text>
</comment>
<comment type="similarity">
    <text evidence="8">Belongs to the nuclear hormone receptor family. NR3 subfamily.</text>
</comment>